<accession>P21046</accession>
<comment type="function">
    <text evidence="1">Major early protein present in virus factories. The presence of BEN domains suggests a possible role in organization of viral DNA during replication or transcription. Plays an essential role in the inhibition of the cGAS-dependent type I IFN induction in host dendritic cells. Mechanistically, abolishes cGAMP production by triggering host CGAS degradation via a proteasome-dependent mechanism.</text>
</comment>
<comment type="subunit">
    <text evidence="1">Interacts with host CGAS; this interaction inhibits CGAS-mediated type I interferon response.</text>
</comment>
<comment type="subcellular location">
    <subcellularLocation>
        <location evidence="1">Host cytoplasm</location>
    </subcellularLocation>
    <subcellularLocation>
        <location evidence="1">Host nucleus</location>
    </subcellularLocation>
    <subcellularLocation>
        <location evidence="2">Membrane</location>
        <topology evidence="2">Single-pass membrane protein</topology>
    </subcellularLocation>
    <text evidence="1">Localizes in cytoplasmic virus factories.</text>
</comment>
<comment type="induction">
    <text>Expressed in the early phase of the viral replicative cycle.</text>
</comment>
<comment type="similarity">
    <text evidence="4">Belongs to the orthopoxvirus OPG067 family.</text>
</comment>
<comment type="sequence caution" evidence="4">
    <conflict type="frameshift">
        <sequence resource="EMBL-CDS" id="AAA48042"/>
    </conflict>
</comment>
<evidence type="ECO:0000250" key="1">
    <source>
        <dbReference type="UniProtKB" id="P21606"/>
    </source>
</evidence>
<evidence type="ECO:0000255" key="2"/>
<evidence type="ECO:0000255" key="3">
    <source>
        <dbReference type="PROSITE-ProRule" id="PRU00784"/>
    </source>
</evidence>
<evidence type="ECO:0000305" key="4"/>
<proteinExistence type="evidence at transcript level"/>
<sequence length="341" mass="40316">MLILTKVNIYMLIIVLWLYGYNFIMSGSQCPMINDDSFTLKRKYQIDSAESTMKMDKKRTKFQNRAKMVKEINQTIRAAQTHYETLKLGYIKFKRMIRTTTLEDIAPSIPNNQKTYKLFSDISAIGKASQNPSKMVYALLLYMFPNLFGDDHRFIRYRMHPMSKIKHKIFSPFKLNLIRILVEERFYNNECRSNKWRIIGTQVDKMLIAESDKYTIDARYNLKPMYRIKGKSEEDTLFIKQMVEQCVTSQELVEKVLKILFRDLFKSGEYKAYRYDDDVENGFIGLDTLKLNIVHDIVEPCMPVRRPVAKILCKEMVNKYFENPLHIIGKNLQECIDFVSE</sequence>
<organism>
    <name type="scientific">Vaccinia virus (strain Copenhagen)</name>
    <name type="common">VACV</name>
    <dbReference type="NCBI Taxonomy" id="10249"/>
    <lineage>
        <taxon>Viruses</taxon>
        <taxon>Varidnaviria</taxon>
        <taxon>Bamfordvirae</taxon>
        <taxon>Nucleocytoviricota</taxon>
        <taxon>Pokkesviricetes</taxon>
        <taxon>Chitovirales</taxon>
        <taxon>Poxviridae</taxon>
        <taxon>Chordopoxvirinae</taxon>
        <taxon>Orthopoxvirus</taxon>
        <taxon>Vaccinia virus</taxon>
    </lineage>
</organism>
<organismHost>
    <name type="scientific">Homo sapiens</name>
    <name type="common">Human</name>
    <dbReference type="NCBI Taxonomy" id="9606"/>
</organismHost>
<dbReference type="EMBL" id="M35027">
    <property type="protein sequence ID" value="AAA48042.1"/>
    <property type="status" value="ALT_FRAME"/>
    <property type="molecule type" value="Genomic_DNA"/>
</dbReference>
<dbReference type="PIR" id="I42508">
    <property type="entry name" value="I42508"/>
</dbReference>
<dbReference type="SMR" id="P21046"/>
<dbReference type="Proteomes" id="UP000008269">
    <property type="component" value="Segment"/>
</dbReference>
<dbReference type="GO" id="GO:0030430">
    <property type="term" value="C:host cell cytoplasm"/>
    <property type="evidence" value="ECO:0007669"/>
    <property type="project" value="UniProtKB-SubCell"/>
</dbReference>
<dbReference type="GO" id="GO:0042025">
    <property type="term" value="C:host cell nucleus"/>
    <property type="evidence" value="ECO:0007669"/>
    <property type="project" value="UniProtKB-SubCell"/>
</dbReference>
<dbReference type="GO" id="GO:0016020">
    <property type="term" value="C:membrane"/>
    <property type="evidence" value="ECO:0007669"/>
    <property type="project" value="UniProtKB-SubCell"/>
</dbReference>
<dbReference type="GO" id="GO:0003677">
    <property type="term" value="F:DNA binding"/>
    <property type="evidence" value="ECO:0007669"/>
    <property type="project" value="InterPro"/>
</dbReference>
<dbReference type="GO" id="GO:0052170">
    <property type="term" value="P:symbiont-mediated suppression of host innate immune response"/>
    <property type="evidence" value="ECO:0007669"/>
    <property type="project" value="UniProtKB-KW"/>
</dbReference>
<dbReference type="InterPro" id="IPR018379">
    <property type="entry name" value="BEN_domain"/>
</dbReference>
<dbReference type="InterPro" id="IPR004334">
    <property type="entry name" value="Poxvirus_E5R"/>
</dbReference>
<dbReference type="Pfam" id="PF10523">
    <property type="entry name" value="BEN"/>
    <property type="match status" value="2"/>
</dbReference>
<dbReference type="PIRSF" id="PIRSF015691">
    <property type="entry name" value="VAC_E5R"/>
    <property type="match status" value="1"/>
</dbReference>
<dbReference type="PROSITE" id="PS51457">
    <property type="entry name" value="BEN"/>
    <property type="match status" value="2"/>
</dbReference>
<reference key="1">
    <citation type="journal article" date="1990" name="Virology">
        <title>The complete DNA sequence of vaccinia virus.</title>
        <authorList>
            <person name="Goebel S.J."/>
            <person name="Johnson G.P."/>
            <person name="Perkus M.E."/>
            <person name="Davis S.W."/>
            <person name="Winslow J.P."/>
            <person name="Paoletti E."/>
        </authorList>
    </citation>
    <scope>NUCLEOTIDE SEQUENCE [LARGE SCALE GENOMIC DNA]</scope>
</reference>
<reference key="2">
    <citation type="journal article" date="1990" name="Virology">
        <title>Appendix to 'The complete DNA sequence of vaccinia virus'.</title>
        <authorList>
            <person name="Goebel S.J."/>
            <person name="Johnson G.P."/>
            <person name="Perkus M.E."/>
            <person name="Davis S.W."/>
            <person name="Winslow J.P."/>
            <person name="Paoletti E."/>
        </authorList>
    </citation>
    <scope>NUCLEOTIDE SEQUENCE [LARGE SCALE GENOMIC DNA]</scope>
</reference>
<keyword id="KW-0244">Early protein</keyword>
<keyword id="KW-1035">Host cytoplasm</keyword>
<keyword id="KW-1048">Host nucleus</keyword>
<keyword id="KW-0945">Host-virus interaction</keyword>
<keyword id="KW-1090">Inhibition of host innate immune response by virus</keyword>
<keyword id="KW-1113">Inhibition of host RLR pathway by virus</keyword>
<keyword id="KW-0472">Membrane</keyword>
<keyword id="KW-1185">Reference proteome</keyword>
<keyword id="KW-0677">Repeat</keyword>
<keyword id="KW-0812">Transmembrane</keyword>
<keyword id="KW-1133">Transmembrane helix</keyword>
<keyword id="KW-0899">Viral immunoevasion</keyword>
<name>PG067_VACCC</name>
<protein>
    <recommendedName>
        <fullName>Protein OPG067</fullName>
    </recommendedName>
    <alternativeName>
        <fullName>Protein E5</fullName>
    </alternativeName>
</protein>
<gene>
    <name type="primary">OPG067</name>
    <name type="ORF">E5R</name>
</gene>
<feature type="chain" id="PRO_0000099450" description="Protein OPG067">
    <location>
        <begin position="1"/>
        <end position="341"/>
    </location>
</feature>
<feature type="transmembrane region" description="Helical" evidence="2">
    <location>
        <begin position="7"/>
        <end position="25"/>
    </location>
</feature>
<feature type="domain" description="BEN 1" evidence="3">
    <location>
        <begin position="112"/>
        <end position="222"/>
    </location>
</feature>
<feature type="domain" description="BEN 2" evidence="3">
    <location>
        <begin position="233"/>
        <end position="328"/>
    </location>
</feature>